<reference key="1">
    <citation type="journal article" date="2007" name="PLoS Genet.">
        <title>Patterns and implications of gene gain and loss in the evolution of Prochlorococcus.</title>
        <authorList>
            <person name="Kettler G.C."/>
            <person name="Martiny A.C."/>
            <person name="Huang K."/>
            <person name="Zucker J."/>
            <person name="Coleman M.L."/>
            <person name="Rodrigue S."/>
            <person name="Chen F."/>
            <person name="Lapidus A."/>
            <person name="Ferriera S."/>
            <person name="Johnson J."/>
            <person name="Steglich C."/>
            <person name="Church G.M."/>
            <person name="Richardson P."/>
            <person name="Chisholm S.W."/>
        </authorList>
    </citation>
    <scope>NUCLEOTIDE SEQUENCE [LARGE SCALE GENOMIC DNA]</scope>
    <source>
        <strain>MIT 9303</strain>
    </source>
</reference>
<protein>
    <recommendedName>
        <fullName evidence="2">Cytochrome c biogenesis protein CcsA</fullName>
    </recommendedName>
</protein>
<organism>
    <name type="scientific">Prochlorococcus marinus (strain MIT 9303)</name>
    <dbReference type="NCBI Taxonomy" id="59922"/>
    <lineage>
        <taxon>Bacteria</taxon>
        <taxon>Bacillati</taxon>
        <taxon>Cyanobacteriota</taxon>
        <taxon>Cyanophyceae</taxon>
        <taxon>Synechococcales</taxon>
        <taxon>Prochlorococcaceae</taxon>
        <taxon>Prochlorococcus</taxon>
    </lineage>
</organism>
<dbReference type="EMBL" id="CP000554">
    <property type="protein sequence ID" value="ABM78425.1"/>
    <property type="molecule type" value="Genomic_DNA"/>
</dbReference>
<dbReference type="RefSeq" id="WP_011826313.1">
    <property type="nucleotide sequence ID" value="NC_008820.1"/>
</dbReference>
<dbReference type="SMR" id="A2CAB5"/>
<dbReference type="STRING" id="59922.P9303_16811"/>
<dbReference type="KEGG" id="pmf:P9303_16811"/>
<dbReference type="HOGENOM" id="CLU_049710_2_4_3"/>
<dbReference type="BioCyc" id="PMAR59922:G1G80-1460-MONOMER"/>
<dbReference type="Proteomes" id="UP000002274">
    <property type="component" value="Chromosome"/>
</dbReference>
<dbReference type="GO" id="GO:0031676">
    <property type="term" value="C:plasma membrane-derived thylakoid membrane"/>
    <property type="evidence" value="ECO:0007669"/>
    <property type="project" value="UniProtKB-SubCell"/>
</dbReference>
<dbReference type="GO" id="GO:0020037">
    <property type="term" value="F:heme binding"/>
    <property type="evidence" value="ECO:0007669"/>
    <property type="project" value="InterPro"/>
</dbReference>
<dbReference type="GO" id="GO:0015232">
    <property type="term" value="F:heme transmembrane transporter activity"/>
    <property type="evidence" value="ECO:0007669"/>
    <property type="project" value="InterPro"/>
</dbReference>
<dbReference type="GO" id="GO:0017004">
    <property type="term" value="P:cytochrome complex assembly"/>
    <property type="evidence" value="ECO:0007669"/>
    <property type="project" value="UniProtKB-UniRule"/>
</dbReference>
<dbReference type="HAMAP" id="MF_01391">
    <property type="entry name" value="CytC_CcsA"/>
    <property type="match status" value="1"/>
</dbReference>
<dbReference type="InterPro" id="IPR002541">
    <property type="entry name" value="Cyt_c_assembly"/>
</dbReference>
<dbReference type="InterPro" id="IPR003557">
    <property type="entry name" value="Cyt_c_biogenesis_CcmC"/>
</dbReference>
<dbReference type="InterPro" id="IPR017562">
    <property type="entry name" value="Cyt_c_biogenesis_CcsA"/>
</dbReference>
<dbReference type="InterPro" id="IPR045062">
    <property type="entry name" value="Cyt_c_biogenesis_CcsA/CcmC"/>
</dbReference>
<dbReference type="NCBIfam" id="TIGR03144">
    <property type="entry name" value="cytochr_II_ccsB"/>
    <property type="match status" value="1"/>
</dbReference>
<dbReference type="PANTHER" id="PTHR30071:SF1">
    <property type="entry name" value="CYTOCHROME B_B6 PROTEIN-RELATED"/>
    <property type="match status" value="1"/>
</dbReference>
<dbReference type="PANTHER" id="PTHR30071">
    <property type="entry name" value="HEME EXPORTER PROTEIN C"/>
    <property type="match status" value="1"/>
</dbReference>
<dbReference type="Pfam" id="PF01578">
    <property type="entry name" value="Cytochrom_C_asm"/>
    <property type="match status" value="1"/>
</dbReference>
<dbReference type="PRINTS" id="PR01386">
    <property type="entry name" value="CCMCBIOGNSIS"/>
</dbReference>
<gene>
    <name evidence="2" type="primary">ccsA</name>
    <name type="ordered locus">P9303_16811</name>
</gene>
<proteinExistence type="inferred from homology"/>
<keyword id="KW-0201">Cytochrome c-type biogenesis</keyword>
<keyword id="KW-0472">Membrane</keyword>
<keyword id="KW-0793">Thylakoid</keyword>
<keyword id="KW-0812">Transmembrane</keyword>
<keyword id="KW-1133">Transmembrane helix</keyword>
<feature type="chain" id="PRO_0000353708" description="Cytochrome c biogenesis protein CcsA">
    <location>
        <begin position="1"/>
        <end position="318"/>
    </location>
</feature>
<feature type="transmembrane region" description="Helical" evidence="2">
    <location>
        <begin position="17"/>
        <end position="37"/>
    </location>
</feature>
<feature type="transmembrane region" description="Helical" evidence="2">
    <location>
        <begin position="45"/>
        <end position="65"/>
    </location>
</feature>
<feature type="transmembrane region" description="Helical" evidence="2">
    <location>
        <begin position="75"/>
        <end position="95"/>
    </location>
</feature>
<feature type="transmembrane region" description="Helical" evidence="2">
    <location>
        <begin position="104"/>
        <end position="124"/>
    </location>
</feature>
<feature type="transmembrane region" description="Helical" evidence="2">
    <location>
        <begin position="149"/>
        <end position="169"/>
    </location>
</feature>
<feature type="transmembrane region" description="Helical" evidence="2">
    <location>
        <begin position="224"/>
        <end position="244"/>
    </location>
</feature>
<feature type="transmembrane region" description="Helical" evidence="2">
    <location>
        <begin position="258"/>
        <end position="275"/>
    </location>
</feature>
<feature type="transmembrane region" description="Helical" evidence="2">
    <location>
        <begin position="287"/>
        <end position="307"/>
    </location>
</feature>
<comment type="function">
    <text evidence="2">Required during biogenesis of c-type cytochromes (cytochrome c6 and cytochrome f) at the step of heme attachment.</text>
</comment>
<comment type="subunit">
    <text evidence="1">May interact with ccs1.</text>
</comment>
<comment type="subcellular location">
    <subcellularLocation>
        <location evidence="2">Cellular thylakoid membrane</location>
        <topology evidence="2">Multi-pass membrane protein</topology>
    </subcellularLocation>
</comment>
<comment type="similarity">
    <text evidence="2">Belongs to the CcmF/CycK/Ccl1/NrfE/CcsA family.</text>
</comment>
<sequence>MFGVTLAELSASLGDPVLALGLAAFALLLLAIPISFWMVSGGSNSAVVTLLVALANLVLTAQLVLRWWQSGHFPISNLYESLCFLAWACTLAQLLVERSLSSPIVSAAATPMALLCVAFASFALPETLQEASPLVPALRSSWLVMHVSVIMCSYAALLVGSFLSMAVLFTDRQQTLELRSSSIGTGGFRQAKLATSAIDQNDGLRLSSINLSRTEQLDSLSYRTITVGFLLLTLGLISGAVWANEAWGSWWSWDPKETWALICWMVYAAYLHTRFSRGWSGRRPALVAVAGIVVIVVCYIGVNLLGIGLHSYGWFFEA</sequence>
<accession>A2CAB5</accession>
<evidence type="ECO:0000250" key="1"/>
<evidence type="ECO:0000255" key="2">
    <source>
        <dbReference type="HAMAP-Rule" id="MF_01391"/>
    </source>
</evidence>
<name>CCSA_PROM3</name>